<dbReference type="EMBL" id="CP000016">
    <property type="protein sequence ID" value="AAZ40899.1"/>
    <property type="molecule type" value="Genomic_DNA"/>
</dbReference>
<dbReference type="RefSeq" id="WP_011282806.1">
    <property type="nucleotide sequence ID" value="NC_007292.1"/>
</dbReference>
<dbReference type="SMR" id="Q493E3"/>
<dbReference type="STRING" id="291272.BPEN_268"/>
<dbReference type="KEGG" id="bpn:BPEN_268"/>
<dbReference type="eggNOG" id="COG0354">
    <property type="taxonomic scope" value="Bacteria"/>
</dbReference>
<dbReference type="HOGENOM" id="CLU_007884_6_1_6"/>
<dbReference type="OrthoDB" id="9796287at2"/>
<dbReference type="Proteomes" id="UP000007794">
    <property type="component" value="Chromosome"/>
</dbReference>
<dbReference type="GO" id="GO:0005737">
    <property type="term" value="C:cytoplasm"/>
    <property type="evidence" value="ECO:0007669"/>
    <property type="project" value="UniProtKB-SubCell"/>
</dbReference>
<dbReference type="GO" id="GO:0005542">
    <property type="term" value="F:folic acid binding"/>
    <property type="evidence" value="ECO:0007669"/>
    <property type="project" value="UniProtKB-UniRule"/>
</dbReference>
<dbReference type="GO" id="GO:0016226">
    <property type="term" value="P:iron-sulfur cluster assembly"/>
    <property type="evidence" value="ECO:0007669"/>
    <property type="project" value="TreeGrafter"/>
</dbReference>
<dbReference type="GO" id="GO:0009451">
    <property type="term" value="P:RNA modification"/>
    <property type="evidence" value="ECO:0007669"/>
    <property type="project" value="InterPro"/>
</dbReference>
<dbReference type="GO" id="GO:0008033">
    <property type="term" value="P:tRNA processing"/>
    <property type="evidence" value="ECO:0007669"/>
    <property type="project" value="UniProtKB-UniRule"/>
</dbReference>
<dbReference type="Gene3D" id="2.40.30.160">
    <property type="match status" value="1"/>
</dbReference>
<dbReference type="Gene3D" id="3.30.70.1630">
    <property type="match status" value="1"/>
</dbReference>
<dbReference type="Gene3D" id="3.30.70.1400">
    <property type="entry name" value="Aminomethyltransferase beta-barrel domains"/>
    <property type="match status" value="1"/>
</dbReference>
<dbReference type="HAMAP" id="MF_01175">
    <property type="entry name" value="tRNA_modifying_YgfZ"/>
    <property type="match status" value="1"/>
</dbReference>
<dbReference type="InterPro" id="IPR006222">
    <property type="entry name" value="GCV_T_N"/>
</dbReference>
<dbReference type="InterPro" id="IPR029043">
    <property type="entry name" value="GcvT/YgfZ_C"/>
</dbReference>
<dbReference type="InterPro" id="IPR023758">
    <property type="entry name" value="tRNA-modifying_YgfZ"/>
</dbReference>
<dbReference type="InterPro" id="IPR045179">
    <property type="entry name" value="YgfZ/GcvT"/>
</dbReference>
<dbReference type="InterPro" id="IPR017703">
    <property type="entry name" value="YgfZ/GcvT_CS"/>
</dbReference>
<dbReference type="InterPro" id="IPR048451">
    <property type="entry name" value="YgfZ_barrel"/>
</dbReference>
<dbReference type="NCBIfam" id="NF007110">
    <property type="entry name" value="PRK09559.1"/>
    <property type="match status" value="1"/>
</dbReference>
<dbReference type="NCBIfam" id="TIGR03317">
    <property type="entry name" value="ygfZ_signature"/>
    <property type="match status" value="1"/>
</dbReference>
<dbReference type="PANTHER" id="PTHR22602">
    <property type="entry name" value="TRANSFERASE CAF17, MITOCHONDRIAL-RELATED"/>
    <property type="match status" value="1"/>
</dbReference>
<dbReference type="PANTHER" id="PTHR22602:SF0">
    <property type="entry name" value="TRANSFERASE CAF17, MITOCHONDRIAL-RELATED"/>
    <property type="match status" value="1"/>
</dbReference>
<dbReference type="Pfam" id="PF01571">
    <property type="entry name" value="GCV_T"/>
    <property type="match status" value="1"/>
</dbReference>
<dbReference type="Pfam" id="PF21130">
    <property type="entry name" value="YgfZ_barrel"/>
    <property type="match status" value="1"/>
</dbReference>
<dbReference type="SUPFAM" id="SSF101790">
    <property type="entry name" value="Aminomethyltransferase beta-barrel domain"/>
    <property type="match status" value="1"/>
</dbReference>
<dbReference type="SUPFAM" id="SSF103025">
    <property type="entry name" value="Folate-binding domain"/>
    <property type="match status" value="1"/>
</dbReference>
<protein>
    <recommendedName>
        <fullName evidence="1">tRNA-modifying protein YgfZ</fullName>
    </recommendedName>
</protein>
<name>YGFZ_BLOPB</name>
<organism>
    <name type="scientific">Blochmanniella pennsylvanica (strain BPEN)</name>
    <dbReference type="NCBI Taxonomy" id="291272"/>
    <lineage>
        <taxon>Bacteria</taxon>
        <taxon>Pseudomonadati</taxon>
        <taxon>Pseudomonadota</taxon>
        <taxon>Gammaproteobacteria</taxon>
        <taxon>Enterobacterales</taxon>
        <taxon>Enterobacteriaceae</taxon>
        <taxon>ant endosymbionts</taxon>
        <taxon>Candidatus Blochmanniella</taxon>
    </lineage>
</organism>
<accession>Q493E3</accession>
<gene>
    <name type="ordered locus">BPEN_268</name>
</gene>
<feature type="chain" id="PRO_0000262886" description="tRNA-modifying protein YgfZ">
    <location>
        <begin position="1"/>
        <end position="330"/>
    </location>
</feature>
<feature type="binding site" evidence="1">
    <location>
        <position position="28"/>
    </location>
    <ligand>
        <name>folate</name>
        <dbReference type="ChEBI" id="CHEBI:62501"/>
    </ligand>
</feature>
<feature type="binding site" evidence="1">
    <location>
        <position position="192"/>
    </location>
    <ligand>
        <name>folate</name>
        <dbReference type="ChEBI" id="CHEBI:62501"/>
    </ligand>
</feature>
<comment type="function">
    <text evidence="1">Folate-binding protein involved in regulating the level of ATP-DnaA and in the modification of some tRNAs. It is probably a key factor in regulatory networks that act via tRNA modification, such as initiation of chromosomal replication.</text>
</comment>
<comment type="subcellular location">
    <subcellularLocation>
        <location evidence="1">Cytoplasm</location>
    </subcellularLocation>
</comment>
<comment type="similarity">
    <text evidence="1">Belongs to the tRNA-modifying YgfZ family.</text>
</comment>
<proteinExistence type="inferred from homology"/>
<keyword id="KW-0963">Cytoplasm</keyword>
<keyword id="KW-0290">Folate-binding</keyword>
<keyword id="KW-1185">Reference proteome</keyword>
<keyword id="KW-0819">tRNA processing</keyword>
<sequence>MFPRVAFLGQYPVPSKDLPLTFISLEEWTLVRLHGPDVIQCLHNQFTCDIQNLNKHKYSFAAHCNPKGKMISNLYVFHLKNQEMAFIERLNICKKQIEEMKKYMVFSNVTVIPDYNAILIGIAGTNARNHLSMFFSVLPNKTHTIIHTQDVTLLYLSSPSERFLLIINKKSVLDYLLNESQSQIQFNDSRQWVSLDMEAGYPIIEPITSELFIPQAVNMDILDGISFNKGCYIGQESIARIKYRGYNKQTLYRLNGVMDYKKNYNLPAAGDQVELKINNQHWKNVGIVLQSCQIKKDNIWVQVVLNRSILEPSELRITNTQTHDNLMFYY</sequence>
<reference key="1">
    <citation type="journal article" date="2005" name="Genome Res.">
        <title>Genome sequence of Blochmannia pennsylvanicus indicates parallel evolutionary trends among bacterial mutualists of insects.</title>
        <authorList>
            <person name="Degnan P.H."/>
            <person name="Lazarus A.B."/>
            <person name="Wernegreen J.J."/>
        </authorList>
    </citation>
    <scope>NUCLEOTIDE SEQUENCE [LARGE SCALE GENOMIC DNA]</scope>
    <source>
        <strain>BPEN</strain>
    </source>
</reference>
<evidence type="ECO:0000255" key="1">
    <source>
        <dbReference type="HAMAP-Rule" id="MF_01175"/>
    </source>
</evidence>